<organism>
    <name type="scientific">Clostridium tetani (strain Massachusetts / E88)</name>
    <dbReference type="NCBI Taxonomy" id="212717"/>
    <lineage>
        <taxon>Bacteria</taxon>
        <taxon>Bacillati</taxon>
        <taxon>Bacillota</taxon>
        <taxon>Clostridia</taxon>
        <taxon>Eubacteriales</taxon>
        <taxon>Clostridiaceae</taxon>
        <taxon>Clostridium</taxon>
    </lineage>
</organism>
<name>SURE_CLOTE</name>
<feature type="chain" id="PRO_0000111806" description="5'-nucleotidase SurE">
    <location>
        <begin position="1"/>
        <end position="249"/>
    </location>
</feature>
<feature type="binding site" evidence="1">
    <location>
        <position position="8"/>
    </location>
    <ligand>
        <name>a divalent metal cation</name>
        <dbReference type="ChEBI" id="CHEBI:60240"/>
    </ligand>
</feature>
<feature type="binding site" evidence="1">
    <location>
        <position position="9"/>
    </location>
    <ligand>
        <name>a divalent metal cation</name>
        <dbReference type="ChEBI" id="CHEBI:60240"/>
    </ligand>
</feature>
<feature type="binding site" evidence="1">
    <location>
        <position position="39"/>
    </location>
    <ligand>
        <name>a divalent metal cation</name>
        <dbReference type="ChEBI" id="CHEBI:60240"/>
    </ligand>
</feature>
<feature type="binding site" evidence="1">
    <location>
        <position position="96"/>
    </location>
    <ligand>
        <name>a divalent metal cation</name>
        <dbReference type="ChEBI" id="CHEBI:60240"/>
    </ligand>
</feature>
<keyword id="KW-0963">Cytoplasm</keyword>
<keyword id="KW-0378">Hydrolase</keyword>
<keyword id="KW-0479">Metal-binding</keyword>
<keyword id="KW-0547">Nucleotide-binding</keyword>
<keyword id="KW-1185">Reference proteome</keyword>
<reference key="1">
    <citation type="journal article" date="2003" name="Proc. Natl. Acad. Sci. U.S.A.">
        <title>The genome sequence of Clostridium tetani, the causative agent of tetanus disease.</title>
        <authorList>
            <person name="Brueggemann H."/>
            <person name="Baeumer S."/>
            <person name="Fricke W.F."/>
            <person name="Wiezer A."/>
            <person name="Liesegang H."/>
            <person name="Decker I."/>
            <person name="Herzberg C."/>
            <person name="Martinez-Arias R."/>
            <person name="Merkl R."/>
            <person name="Henne A."/>
            <person name="Gottschalk G."/>
        </authorList>
    </citation>
    <scope>NUCLEOTIDE SEQUENCE [LARGE SCALE GENOMIC DNA]</scope>
    <source>
        <strain>Massachusetts / E88</strain>
    </source>
</reference>
<dbReference type="EC" id="3.1.3.5" evidence="1"/>
<dbReference type="EMBL" id="AE015927">
    <property type="protein sequence ID" value="AAO34799.1"/>
    <property type="molecule type" value="Genomic_DNA"/>
</dbReference>
<dbReference type="RefSeq" id="WP_011098471.1">
    <property type="nucleotide sequence ID" value="NC_004557.1"/>
</dbReference>
<dbReference type="SMR" id="Q899M5"/>
<dbReference type="STRING" id="212717.CTC_00147"/>
<dbReference type="GeneID" id="24253482"/>
<dbReference type="KEGG" id="ctc:CTC_00147"/>
<dbReference type="HOGENOM" id="CLU_045192_1_3_9"/>
<dbReference type="OrthoDB" id="9780815at2"/>
<dbReference type="Proteomes" id="UP000001412">
    <property type="component" value="Chromosome"/>
</dbReference>
<dbReference type="GO" id="GO:0005737">
    <property type="term" value="C:cytoplasm"/>
    <property type="evidence" value="ECO:0007669"/>
    <property type="project" value="UniProtKB-SubCell"/>
</dbReference>
<dbReference type="GO" id="GO:0008254">
    <property type="term" value="F:3'-nucleotidase activity"/>
    <property type="evidence" value="ECO:0007669"/>
    <property type="project" value="TreeGrafter"/>
</dbReference>
<dbReference type="GO" id="GO:0008253">
    <property type="term" value="F:5'-nucleotidase activity"/>
    <property type="evidence" value="ECO:0007669"/>
    <property type="project" value="UniProtKB-UniRule"/>
</dbReference>
<dbReference type="GO" id="GO:0004309">
    <property type="term" value="F:exopolyphosphatase activity"/>
    <property type="evidence" value="ECO:0007669"/>
    <property type="project" value="TreeGrafter"/>
</dbReference>
<dbReference type="GO" id="GO:0046872">
    <property type="term" value="F:metal ion binding"/>
    <property type="evidence" value="ECO:0007669"/>
    <property type="project" value="UniProtKB-UniRule"/>
</dbReference>
<dbReference type="GO" id="GO:0000166">
    <property type="term" value="F:nucleotide binding"/>
    <property type="evidence" value="ECO:0007669"/>
    <property type="project" value="UniProtKB-KW"/>
</dbReference>
<dbReference type="FunFam" id="3.40.1210.10:FF:000001">
    <property type="entry name" value="5'/3'-nucleotidase SurE"/>
    <property type="match status" value="1"/>
</dbReference>
<dbReference type="Gene3D" id="3.40.1210.10">
    <property type="entry name" value="Survival protein SurE-like phosphatase/nucleotidase"/>
    <property type="match status" value="1"/>
</dbReference>
<dbReference type="HAMAP" id="MF_00060">
    <property type="entry name" value="SurE"/>
    <property type="match status" value="1"/>
</dbReference>
<dbReference type="InterPro" id="IPR030048">
    <property type="entry name" value="SurE"/>
</dbReference>
<dbReference type="InterPro" id="IPR002828">
    <property type="entry name" value="SurE-like_Pase/nucleotidase"/>
</dbReference>
<dbReference type="InterPro" id="IPR036523">
    <property type="entry name" value="SurE-like_sf"/>
</dbReference>
<dbReference type="NCBIfam" id="NF010543">
    <property type="entry name" value="PRK13933.1"/>
    <property type="match status" value="1"/>
</dbReference>
<dbReference type="NCBIfam" id="TIGR00087">
    <property type="entry name" value="surE"/>
    <property type="match status" value="1"/>
</dbReference>
<dbReference type="PANTHER" id="PTHR30457">
    <property type="entry name" value="5'-NUCLEOTIDASE SURE"/>
    <property type="match status" value="1"/>
</dbReference>
<dbReference type="PANTHER" id="PTHR30457:SF12">
    <property type="entry name" value="5'_3'-NUCLEOTIDASE SURE"/>
    <property type="match status" value="1"/>
</dbReference>
<dbReference type="Pfam" id="PF01975">
    <property type="entry name" value="SurE"/>
    <property type="match status" value="1"/>
</dbReference>
<dbReference type="SUPFAM" id="SSF64167">
    <property type="entry name" value="SurE-like"/>
    <property type="match status" value="1"/>
</dbReference>
<sequence length="249" mass="27449">MRLLLTNDDGVNSKGIYTLAKELQKEHEIIIAAPSIEMSAKSHSITIAKPLFIKEVELDDINATTYSISGTPADCVKVAMDKILDKPVDMVISGINYGTNLGIDILYSGTVSAAIEAAIHNIPSIAMSAEVKNGDINFDTAASIARELVKISQENSMKGNLVLNVNVPCLDKDSLKGLKVCQMGGRTFTSYFEKIEKNKEVSYMLKGELTNNHKPTTDIHFLRKGYTTITPLHYDLTNFKIMNDVSNWF</sequence>
<protein>
    <recommendedName>
        <fullName evidence="1">5'-nucleotidase SurE</fullName>
        <ecNumber evidence="1">3.1.3.5</ecNumber>
    </recommendedName>
    <alternativeName>
        <fullName evidence="1">Nucleoside 5'-monophosphate phosphohydrolase</fullName>
    </alternativeName>
</protein>
<evidence type="ECO:0000255" key="1">
    <source>
        <dbReference type="HAMAP-Rule" id="MF_00060"/>
    </source>
</evidence>
<comment type="function">
    <text evidence="1">Nucleotidase that shows phosphatase activity on nucleoside 5'-monophosphates.</text>
</comment>
<comment type="catalytic activity">
    <reaction evidence="1">
        <text>a ribonucleoside 5'-phosphate + H2O = a ribonucleoside + phosphate</text>
        <dbReference type="Rhea" id="RHEA:12484"/>
        <dbReference type="ChEBI" id="CHEBI:15377"/>
        <dbReference type="ChEBI" id="CHEBI:18254"/>
        <dbReference type="ChEBI" id="CHEBI:43474"/>
        <dbReference type="ChEBI" id="CHEBI:58043"/>
        <dbReference type="EC" id="3.1.3.5"/>
    </reaction>
</comment>
<comment type="cofactor">
    <cofactor evidence="1">
        <name>a divalent metal cation</name>
        <dbReference type="ChEBI" id="CHEBI:60240"/>
    </cofactor>
    <text evidence="1">Binds 1 divalent metal cation per subunit.</text>
</comment>
<comment type="subcellular location">
    <subcellularLocation>
        <location evidence="1">Cytoplasm</location>
    </subcellularLocation>
</comment>
<comment type="similarity">
    <text evidence="1">Belongs to the SurE nucleotidase family.</text>
</comment>
<accession>Q899M5</accession>
<gene>
    <name evidence="1" type="primary">surE</name>
    <name type="ordered locus">CTC_00147</name>
</gene>
<proteinExistence type="inferred from homology"/>